<organism>
    <name type="scientific">Acidithiobacillus ferrooxidans (strain ATCC 23270 / DSM 14882 / CIP 104768 / NCIMB 8455)</name>
    <name type="common">Ferrobacillus ferrooxidans (strain ATCC 23270)</name>
    <dbReference type="NCBI Taxonomy" id="243159"/>
    <lineage>
        <taxon>Bacteria</taxon>
        <taxon>Pseudomonadati</taxon>
        <taxon>Pseudomonadota</taxon>
        <taxon>Acidithiobacillia</taxon>
        <taxon>Acidithiobacillales</taxon>
        <taxon>Acidithiobacillaceae</taxon>
        <taxon>Acidithiobacillus</taxon>
    </lineage>
</organism>
<feature type="chain" id="PRO_1000118113" description="3-methyl-2-oxobutanoate hydroxymethyltransferase">
    <location>
        <begin position="1"/>
        <end position="261"/>
    </location>
</feature>
<feature type="active site" description="Proton acceptor" evidence="1">
    <location>
        <position position="181"/>
    </location>
</feature>
<feature type="binding site" evidence="1">
    <location>
        <begin position="44"/>
        <end position="45"/>
    </location>
    <ligand>
        <name>3-methyl-2-oxobutanoate</name>
        <dbReference type="ChEBI" id="CHEBI:11851"/>
    </ligand>
</feature>
<feature type="binding site" evidence="1">
    <location>
        <position position="44"/>
    </location>
    <ligand>
        <name>Mg(2+)</name>
        <dbReference type="ChEBI" id="CHEBI:18420"/>
    </ligand>
</feature>
<feature type="binding site" evidence="1">
    <location>
        <position position="83"/>
    </location>
    <ligand>
        <name>3-methyl-2-oxobutanoate</name>
        <dbReference type="ChEBI" id="CHEBI:11851"/>
    </ligand>
</feature>
<feature type="binding site" evidence="1">
    <location>
        <position position="83"/>
    </location>
    <ligand>
        <name>Mg(2+)</name>
        <dbReference type="ChEBI" id="CHEBI:18420"/>
    </ligand>
</feature>
<feature type="binding site" evidence="1">
    <location>
        <position position="112"/>
    </location>
    <ligand>
        <name>3-methyl-2-oxobutanoate</name>
        <dbReference type="ChEBI" id="CHEBI:11851"/>
    </ligand>
</feature>
<feature type="binding site" evidence="1">
    <location>
        <position position="114"/>
    </location>
    <ligand>
        <name>Mg(2+)</name>
        <dbReference type="ChEBI" id="CHEBI:18420"/>
    </ligand>
</feature>
<sequence length="261" mass="27743">MHKKIARWVQDKKSGIKRAVVTAYDYPFARLAAEAGVHGILVGDSLGMVVGGGSDTLGVTLEQMAYHTGMVVRGAGDCLVFADLPFGSYEKGPEQAWAAAVTLLRAGADVVKLEGGAEMASTVAFCTERGINICAHIGLTPQRVRQWGSFQRQGTDADSARRLQADAGALAEAGARFLVLEAVPDALAANITRDIAIPTIGIGAGPDTDAQVLVIHDLLGLGTESPPFARRYIEGGRIMRDALAEYVREVGNSEFPPRRKR</sequence>
<reference key="1">
    <citation type="journal article" date="2008" name="BMC Genomics">
        <title>Acidithiobacillus ferrooxidans metabolism: from genome sequence to industrial applications.</title>
        <authorList>
            <person name="Valdes J."/>
            <person name="Pedroso I."/>
            <person name="Quatrini R."/>
            <person name="Dodson R.J."/>
            <person name="Tettelin H."/>
            <person name="Blake R. II"/>
            <person name="Eisen J.A."/>
            <person name="Holmes D.S."/>
        </authorList>
    </citation>
    <scope>NUCLEOTIDE SEQUENCE [LARGE SCALE GENOMIC DNA]</scope>
    <source>
        <strain>ATCC 23270 / DSM 14882 / CIP 104768 / NCIMB 8455</strain>
    </source>
</reference>
<gene>
    <name evidence="1" type="primary">panB</name>
    <name type="ordered locus">AFE_1771</name>
</gene>
<accession>B7JBM8</accession>
<name>PANB_ACIF2</name>
<proteinExistence type="inferred from homology"/>
<keyword id="KW-0963">Cytoplasm</keyword>
<keyword id="KW-0460">Magnesium</keyword>
<keyword id="KW-0479">Metal-binding</keyword>
<keyword id="KW-0566">Pantothenate biosynthesis</keyword>
<keyword id="KW-1185">Reference proteome</keyword>
<keyword id="KW-0808">Transferase</keyword>
<comment type="function">
    <text evidence="1">Catalyzes the reversible reaction in which hydroxymethyl group from 5,10-methylenetetrahydrofolate is transferred onto alpha-ketoisovalerate to form ketopantoate.</text>
</comment>
<comment type="catalytic activity">
    <reaction evidence="1">
        <text>3-methyl-2-oxobutanoate + (6R)-5,10-methylene-5,6,7,8-tetrahydrofolate + H2O = 2-dehydropantoate + (6S)-5,6,7,8-tetrahydrofolate</text>
        <dbReference type="Rhea" id="RHEA:11824"/>
        <dbReference type="ChEBI" id="CHEBI:11561"/>
        <dbReference type="ChEBI" id="CHEBI:11851"/>
        <dbReference type="ChEBI" id="CHEBI:15377"/>
        <dbReference type="ChEBI" id="CHEBI:15636"/>
        <dbReference type="ChEBI" id="CHEBI:57453"/>
        <dbReference type="EC" id="2.1.2.11"/>
    </reaction>
</comment>
<comment type="cofactor">
    <cofactor evidence="1">
        <name>Mg(2+)</name>
        <dbReference type="ChEBI" id="CHEBI:18420"/>
    </cofactor>
    <text evidence="1">Binds 1 Mg(2+) ion per subunit.</text>
</comment>
<comment type="pathway">
    <text evidence="1">Cofactor biosynthesis; (R)-pantothenate biosynthesis; (R)-pantoate from 3-methyl-2-oxobutanoate: step 1/2.</text>
</comment>
<comment type="subunit">
    <text evidence="1">Homodecamer; pentamer of dimers.</text>
</comment>
<comment type="subcellular location">
    <subcellularLocation>
        <location evidence="1">Cytoplasm</location>
    </subcellularLocation>
</comment>
<comment type="similarity">
    <text evidence="1">Belongs to the PanB family.</text>
</comment>
<evidence type="ECO:0000255" key="1">
    <source>
        <dbReference type="HAMAP-Rule" id="MF_00156"/>
    </source>
</evidence>
<protein>
    <recommendedName>
        <fullName evidence="1">3-methyl-2-oxobutanoate hydroxymethyltransferase</fullName>
        <ecNumber evidence="1">2.1.2.11</ecNumber>
    </recommendedName>
    <alternativeName>
        <fullName evidence="1">Ketopantoate hydroxymethyltransferase</fullName>
        <shortName evidence="1">KPHMT</shortName>
    </alternativeName>
</protein>
<dbReference type="EC" id="2.1.2.11" evidence="1"/>
<dbReference type="EMBL" id="CP001219">
    <property type="protein sequence ID" value="ACK80864.1"/>
    <property type="molecule type" value="Genomic_DNA"/>
</dbReference>
<dbReference type="RefSeq" id="WP_009561698.1">
    <property type="nucleotide sequence ID" value="NC_011761.1"/>
</dbReference>
<dbReference type="SMR" id="B7JBM8"/>
<dbReference type="STRING" id="243159.AFE_1771"/>
<dbReference type="PaxDb" id="243159-AFE_1771"/>
<dbReference type="GeneID" id="65280940"/>
<dbReference type="KEGG" id="afr:AFE_1771"/>
<dbReference type="eggNOG" id="COG0413">
    <property type="taxonomic scope" value="Bacteria"/>
</dbReference>
<dbReference type="HOGENOM" id="CLU_036645_1_0_6"/>
<dbReference type="UniPathway" id="UPA00028">
    <property type="reaction ID" value="UER00003"/>
</dbReference>
<dbReference type="Proteomes" id="UP000001362">
    <property type="component" value="Chromosome"/>
</dbReference>
<dbReference type="GO" id="GO:0005737">
    <property type="term" value="C:cytoplasm"/>
    <property type="evidence" value="ECO:0007669"/>
    <property type="project" value="UniProtKB-SubCell"/>
</dbReference>
<dbReference type="GO" id="GO:0003864">
    <property type="term" value="F:3-methyl-2-oxobutanoate hydroxymethyltransferase activity"/>
    <property type="evidence" value="ECO:0007669"/>
    <property type="project" value="UniProtKB-UniRule"/>
</dbReference>
<dbReference type="GO" id="GO:0000287">
    <property type="term" value="F:magnesium ion binding"/>
    <property type="evidence" value="ECO:0007669"/>
    <property type="project" value="TreeGrafter"/>
</dbReference>
<dbReference type="GO" id="GO:0015940">
    <property type="term" value="P:pantothenate biosynthetic process"/>
    <property type="evidence" value="ECO:0007669"/>
    <property type="project" value="UniProtKB-UniRule"/>
</dbReference>
<dbReference type="CDD" id="cd06557">
    <property type="entry name" value="KPHMT-like"/>
    <property type="match status" value="1"/>
</dbReference>
<dbReference type="FunFam" id="3.20.20.60:FF:000003">
    <property type="entry name" value="3-methyl-2-oxobutanoate hydroxymethyltransferase"/>
    <property type="match status" value="1"/>
</dbReference>
<dbReference type="Gene3D" id="3.20.20.60">
    <property type="entry name" value="Phosphoenolpyruvate-binding domains"/>
    <property type="match status" value="1"/>
</dbReference>
<dbReference type="HAMAP" id="MF_00156">
    <property type="entry name" value="PanB"/>
    <property type="match status" value="1"/>
</dbReference>
<dbReference type="InterPro" id="IPR003700">
    <property type="entry name" value="Pantoate_hydroxy_MeTrfase"/>
</dbReference>
<dbReference type="InterPro" id="IPR015813">
    <property type="entry name" value="Pyrv/PenolPyrv_kinase-like_dom"/>
</dbReference>
<dbReference type="InterPro" id="IPR040442">
    <property type="entry name" value="Pyrv_kinase-like_dom_sf"/>
</dbReference>
<dbReference type="NCBIfam" id="TIGR00222">
    <property type="entry name" value="panB"/>
    <property type="match status" value="1"/>
</dbReference>
<dbReference type="NCBIfam" id="NF001452">
    <property type="entry name" value="PRK00311.1"/>
    <property type="match status" value="1"/>
</dbReference>
<dbReference type="PANTHER" id="PTHR20881">
    <property type="entry name" value="3-METHYL-2-OXOBUTANOATE HYDROXYMETHYLTRANSFERASE"/>
    <property type="match status" value="1"/>
</dbReference>
<dbReference type="PANTHER" id="PTHR20881:SF0">
    <property type="entry name" value="3-METHYL-2-OXOBUTANOATE HYDROXYMETHYLTRANSFERASE"/>
    <property type="match status" value="1"/>
</dbReference>
<dbReference type="Pfam" id="PF02548">
    <property type="entry name" value="Pantoate_transf"/>
    <property type="match status" value="1"/>
</dbReference>
<dbReference type="PIRSF" id="PIRSF000388">
    <property type="entry name" value="Pantoate_hydroxy_MeTrfase"/>
    <property type="match status" value="1"/>
</dbReference>
<dbReference type="SUPFAM" id="SSF51621">
    <property type="entry name" value="Phosphoenolpyruvate/pyruvate domain"/>
    <property type="match status" value="1"/>
</dbReference>